<gene>
    <name evidence="1" type="primary">dapA</name>
    <name type="ordered locus">SYO3AOP1_0032</name>
</gene>
<organism>
    <name type="scientific">Sulfurihydrogenibium sp. (strain YO3AOP1)</name>
    <dbReference type="NCBI Taxonomy" id="436114"/>
    <lineage>
        <taxon>Bacteria</taxon>
        <taxon>Pseudomonadati</taxon>
        <taxon>Aquificota</taxon>
        <taxon>Aquificia</taxon>
        <taxon>Aquificales</taxon>
        <taxon>Hydrogenothermaceae</taxon>
        <taxon>Sulfurihydrogenibium</taxon>
    </lineage>
</organism>
<reference key="1">
    <citation type="journal article" date="2009" name="J. Bacteriol.">
        <title>Complete and draft genome sequences of six members of the Aquificales.</title>
        <authorList>
            <person name="Reysenbach A.-L."/>
            <person name="Hamamura N."/>
            <person name="Podar M."/>
            <person name="Griffiths E."/>
            <person name="Ferreira S."/>
            <person name="Hochstein R."/>
            <person name="Heidelberg J."/>
            <person name="Johnson J."/>
            <person name="Mead D."/>
            <person name="Pohorille A."/>
            <person name="Sarmiento M."/>
            <person name="Schweighofer K."/>
            <person name="Seshadri R."/>
            <person name="Voytek M.A."/>
        </authorList>
    </citation>
    <scope>NUCLEOTIDE SEQUENCE [LARGE SCALE GENOMIC DNA]</scope>
    <source>
        <strain>YO3AOP1</strain>
    </source>
</reference>
<comment type="function">
    <text evidence="1">Catalyzes the condensation of (S)-aspartate-beta-semialdehyde [(S)-ASA] and pyruvate to 4-hydroxy-tetrahydrodipicolinate (HTPA).</text>
</comment>
<comment type="catalytic activity">
    <reaction evidence="1">
        <text>L-aspartate 4-semialdehyde + pyruvate = (2S,4S)-4-hydroxy-2,3,4,5-tetrahydrodipicolinate + H2O + H(+)</text>
        <dbReference type="Rhea" id="RHEA:34171"/>
        <dbReference type="ChEBI" id="CHEBI:15361"/>
        <dbReference type="ChEBI" id="CHEBI:15377"/>
        <dbReference type="ChEBI" id="CHEBI:15378"/>
        <dbReference type="ChEBI" id="CHEBI:67139"/>
        <dbReference type="ChEBI" id="CHEBI:537519"/>
        <dbReference type="EC" id="4.3.3.7"/>
    </reaction>
</comment>
<comment type="pathway">
    <text evidence="1">Amino-acid biosynthesis; L-lysine biosynthesis via DAP pathway; (S)-tetrahydrodipicolinate from L-aspartate: step 3/4.</text>
</comment>
<comment type="subunit">
    <text evidence="1">Homotetramer; dimer of dimers.</text>
</comment>
<comment type="subcellular location">
    <subcellularLocation>
        <location evidence="1">Cytoplasm</location>
    </subcellularLocation>
</comment>
<comment type="similarity">
    <text evidence="1">Belongs to the DapA family.</text>
</comment>
<comment type="caution">
    <text evidence="2">Was originally thought to be a dihydrodipicolinate synthase (DHDPS), catalyzing the condensation of (S)-aspartate-beta-semialdehyde [(S)-ASA] and pyruvate to dihydrodipicolinate (DHDP). However, it was shown in E.coli that the product of the enzymatic reaction is not dihydrodipicolinate but in fact (4S)-4-hydroxy-2,3,4,5-tetrahydro-(2S)-dipicolinic acid (HTPA), and that the consecutive dehydration reaction leading to DHDP is not spontaneous but catalyzed by DapB.</text>
</comment>
<dbReference type="EC" id="4.3.3.7" evidence="1"/>
<dbReference type="EMBL" id="CP001080">
    <property type="protein sequence ID" value="ACD65683.1"/>
    <property type="molecule type" value="Genomic_DNA"/>
</dbReference>
<dbReference type="RefSeq" id="WP_012458775.1">
    <property type="nucleotide sequence ID" value="NC_010730.1"/>
</dbReference>
<dbReference type="SMR" id="B2V6F1"/>
<dbReference type="STRING" id="436114.SYO3AOP1_0032"/>
<dbReference type="KEGG" id="sul:SYO3AOP1_0032"/>
<dbReference type="eggNOG" id="COG0329">
    <property type="taxonomic scope" value="Bacteria"/>
</dbReference>
<dbReference type="HOGENOM" id="CLU_049343_7_1_0"/>
<dbReference type="UniPathway" id="UPA00034">
    <property type="reaction ID" value="UER00017"/>
</dbReference>
<dbReference type="GO" id="GO:0005829">
    <property type="term" value="C:cytosol"/>
    <property type="evidence" value="ECO:0007669"/>
    <property type="project" value="TreeGrafter"/>
</dbReference>
<dbReference type="GO" id="GO:0008840">
    <property type="term" value="F:4-hydroxy-tetrahydrodipicolinate synthase activity"/>
    <property type="evidence" value="ECO:0007669"/>
    <property type="project" value="UniProtKB-UniRule"/>
</dbReference>
<dbReference type="GO" id="GO:0019877">
    <property type="term" value="P:diaminopimelate biosynthetic process"/>
    <property type="evidence" value="ECO:0007669"/>
    <property type="project" value="UniProtKB-UniRule"/>
</dbReference>
<dbReference type="GO" id="GO:0009089">
    <property type="term" value="P:lysine biosynthetic process via diaminopimelate"/>
    <property type="evidence" value="ECO:0007669"/>
    <property type="project" value="UniProtKB-UniRule"/>
</dbReference>
<dbReference type="CDD" id="cd00950">
    <property type="entry name" value="DHDPS"/>
    <property type="match status" value="1"/>
</dbReference>
<dbReference type="Gene3D" id="3.20.20.70">
    <property type="entry name" value="Aldolase class I"/>
    <property type="match status" value="1"/>
</dbReference>
<dbReference type="HAMAP" id="MF_00418">
    <property type="entry name" value="DapA"/>
    <property type="match status" value="1"/>
</dbReference>
<dbReference type="InterPro" id="IPR013785">
    <property type="entry name" value="Aldolase_TIM"/>
</dbReference>
<dbReference type="InterPro" id="IPR005263">
    <property type="entry name" value="DapA"/>
</dbReference>
<dbReference type="InterPro" id="IPR002220">
    <property type="entry name" value="DapA-like"/>
</dbReference>
<dbReference type="InterPro" id="IPR020625">
    <property type="entry name" value="Schiff_base-form_aldolases_AS"/>
</dbReference>
<dbReference type="InterPro" id="IPR020624">
    <property type="entry name" value="Schiff_base-form_aldolases_CS"/>
</dbReference>
<dbReference type="NCBIfam" id="TIGR00674">
    <property type="entry name" value="dapA"/>
    <property type="match status" value="1"/>
</dbReference>
<dbReference type="PANTHER" id="PTHR12128:SF66">
    <property type="entry name" value="4-HYDROXY-2-OXOGLUTARATE ALDOLASE, MITOCHONDRIAL"/>
    <property type="match status" value="1"/>
</dbReference>
<dbReference type="PANTHER" id="PTHR12128">
    <property type="entry name" value="DIHYDRODIPICOLINATE SYNTHASE"/>
    <property type="match status" value="1"/>
</dbReference>
<dbReference type="Pfam" id="PF00701">
    <property type="entry name" value="DHDPS"/>
    <property type="match status" value="1"/>
</dbReference>
<dbReference type="PIRSF" id="PIRSF001365">
    <property type="entry name" value="DHDPS"/>
    <property type="match status" value="1"/>
</dbReference>
<dbReference type="PRINTS" id="PR00146">
    <property type="entry name" value="DHPICSNTHASE"/>
</dbReference>
<dbReference type="SMART" id="SM01130">
    <property type="entry name" value="DHDPS"/>
    <property type="match status" value="1"/>
</dbReference>
<dbReference type="SUPFAM" id="SSF51569">
    <property type="entry name" value="Aldolase"/>
    <property type="match status" value="1"/>
</dbReference>
<dbReference type="PROSITE" id="PS00665">
    <property type="entry name" value="DHDPS_1"/>
    <property type="match status" value="1"/>
</dbReference>
<dbReference type="PROSITE" id="PS00666">
    <property type="entry name" value="DHDPS_2"/>
    <property type="match status" value="1"/>
</dbReference>
<accession>B2V6F1</accession>
<sequence>MFYGSVVALITPFKDGTLDRQGLKRLIEFHIENGTDAIVVAGTTGESPTLTYEEHELLIELAVGYSNKRIPIIAGTGANSTHEAITLTKFAEKVGADASLQVVPYYNKPTQEGIYQHFKAIAEETNIPLILYNIPSRTGVDMLPETFARLYGDFPNVIGIKEATGNVARVSETISLTNEDVLILSGDDALTLPMMAVGAKGVISVANNIIPKEISQMCKLALEGKFEEAKKIHNQYWDLFKVLFIETNPIPIKTAAYLMGLIESLELRLPLYTMSKSNEEKLKEVLRKHSLIK</sequence>
<name>DAPA_SULSY</name>
<feature type="chain" id="PRO_1000124071" description="4-hydroxy-tetrahydrodipicolinate synthase">
    <location>
        <begin position="1"/>
        <end position="293"/>
    </location>
</feature>
<feature type="active site" description="Proton donor/acceptor" evidence="1">
    <location>
        <position position="132"/>
    </location>
</feature>
<feature type="active site" description="Schiff-base intermediate with substrate" evidence="1">
    <location>
        <position position="161"/>
    </location>
</feature>
<feature type="binding site" evidence="1">
    <location>
        <position position="44"/>
    </location>
    <ligand>
        <name>pyruvate</name>
        <dbReference type="ChEBI" id="CHEBI:15361"/>
    </ligand>
</feature>
<feature type="binding site" evidence="1">
    <location>
        <position position="203"/>
    </location>
    <ligand>
        <name>pyruvate</name>
        <dbReference type="ChEBI" id="CHEBI:15361"/>
    </ligand>
</feature>
<feature type="site" description="Part of a proton relay during catalysis" evidence="1">
    <location>
        <position position="43"/>
    </location>
</feature>
<feature type="site" description="Part of a proton relay during catalysis" evidence="1">
    <location>
        <position position="106"/>
    </location>
</feature>
<keyword id="KW-0028">Amino-acid biosynthesis</keyword>
<keyword id="KW-0963">Cytoplasm</keyword>
<keyword id="KW-0220">Diaminopimelate biosynthesis</keyword>
<keyword id="KW-0456">Lyase</keyword>
<keyword id="KW-0457">Lysine biosynthesis</keyword>
<keyword id="KW-0704">Schiff base</keyword>
<proteinExistence type="inferred from homology"/>
<protein>
    <recommendedName>
        <fullName evidence="1">4-hydroxy-tetrahydrodipicolinate synthase</fullName>
        <shortName evidence="1">HTPA synthase</shortName>
        <ecNumber evidence="1">4.3.3.7</ecNumber>
    </recommendedName>
</protein>
<evidence type="ECO:0000255" key="1">
    <source>
        <dbReference type="HAMAP-Rule" id="MF_00418"/>
    </source>
</evidence>
<evidence type="ECO:0000305" key="2"/>